<comment type="function">
    <text evidence="1">Component of the A-type ATP synthase that produces ATP from ADP in the presence of a proton gradient across the membrane. The A chain is the catalytic subunit.</text>
</comment>
<comment type="catalytic activity">
    <reaction evidence="1">
        <text>ATP + H2O + 4 H(+)(in) = ADP + phosphate + 5 H(+)(out)</text>
        <dbReference type="Rhea" id="RHEA:57720"/>
        <dbReference type="ChEBI" id="CHEBI:15377"/>
        <dbReference type="ChEBI" id="CHEBI:15378"/>
        <dbReference type="ChEBI" id="CHEBI:30616"/>
        <dbReference type="ChEBI" id="CHEBI:43474"/>
        <dbReference type="ChEBI" id="CHEBI:456216"/>
        <dbReference type="EC" id="7.1.2.2"/>
    </reaction>
</comment>
<comment type="subunit">
    <text evidence="1">Has multiple subunits with at least A(3), B(3), C, D, E, F, H, I and proteolipid K(x).</text>
</comment>
<comment type="subcellular location">
    <subcellularLocation>
        <location evidence="1">Cell membrane</location>
        <topology evidence="1">Peripheral membrane protein</topology>
    </subcellularLocation>
</comment>
<comment type="similarity">
    <text evidence="1">Belongs to the ATPase alpha/beta chains family.</text>
</comment>
<reference key="1">
    <citation type="journal article" date="2010" name="Proc. Natl. Acad. Sci. U.S.A.">
        <title>Nitrosopumilus maritimus genome reveals unique mechanisms for nitrification and autotrophy in globally distributed marine crenarchaea.</title>
        <authorList>
            <person name="Walker C.B."/>
            <person name="de la Torre J.R."/>
            <person name="Klotz M.G."/>
            <person name="Urakawa H."/>
            <person name="Pinel N."/>
            <person name="Arp D.J."/>
            <person name="Brochier-Armanet C."/>
            <person name="Chain P.S."/>
            <person name="Chan P.P."/>
            <person name="Gollabgir A."/>
            <person name="Hemp J."/>
            <person name="Hugler M."/>
            <person name="Karr E.A."/>
            <person name="Konneke M."/>
            <person name="Shin M."/>
            <person name="Lawton T.J."/>
            <person name="Lowe T."/>
            <person name="Martens-Habbena W."/>
            <person name="Sayavedra-Soto L.A."/>
            <person name="Lang D."/>
            <person name="Sievert S.M."/>
            <person name="Rosenzweig A.C."/>
            <person name="Manning G."/>
            <person name="Stahl D.A."/>
        </authorList>
    </citation>
    <scope>NUCLEOTIDE SEQUENCE [LARGE SCALE GENOMIC DNA]</scope>
    <source>
        <strain>SCM1</strain>
    </source>
</reference>
<accession>A9A2R0</accession>
<organism>
    <name type="scientific">Nitrosopumilus maritimus (strain SCM1)</name>
    <dbReference type="NCBI Taxonomy" id="436308"/>
    <lineage>
        <taxon>Archaea</taxon>
        <taxon>Nitrososphaerota</taxon>
        <taxon>Nitrososphaeria</taxon>
        <taxon>Nitrosopumilales</taxon>
        <taxon>Nitrosopumilaceae</taxon>
        <taxon>Nitrosopumilus</taxon>
    </lineage>
</organism>
<keyword id="KW-0066">ATP synthesis</keyword>
<keyword id="KW-0067">ATP-binding</keyword>
<keyword id="KW-1003">Cell membrane</keyword>
<keyword id="KW-0375">Hydrogen ion transport</keyword>
<keyword id="KW-0406">Ion transport</keyword>
<keyword id="KW-0472">Membrane</keyword>
<keyword id="KW-0547">Nucleotide-binding</keyword>
<keyword id="KW-1185">Reference proteome</keyword>
<keyword id="KW-1278">Translocase</keyword>
<keyword id="KW-0813">Transport</keyword>
<protein>
    <recommendedName>
        <fullName evidence="1">A-type ATP synthase subunit A</fullName>
        <ecNumber evidence="1">7.1.2.2</ecNumber>
    </recommendedName>
</protein>
<gene>
    <name evidence="1" type="primary">atpA</name>
    <name type="ordered locus">Nmar_1691</name>
</gene>
<dbReference type="EC" id="7.1.2.2" evidence="1"/>
<dbReference type="EMBL" id="CP000866">
    <property type="protein sequence ID" value="ABX13587.1"/>
    <property type="molecule type" value="Genomic_DNA"/>
</dbReference>
<dbReference type="RefSeq" id="WP_012216073.1">
    <property type="nucleotide sequence ID" value="NC_010085.1"/>
</dbReference>
<dbReference type="SMR" id="A9A2R0"/>
<dbReference type="FunCoup" id="A9A2R0">
    <property type="interactions" value="145"/>
</dbReference>
<dbReference type="STRING" id="436308.Nmar_1691"/>
<dbReference type="EnsemblBacteria" id="ABX13587">
    <property type="protein sequence ID" value="ABX13587"/>
    <property type="gene ID" value="Nmar_1691"/>
</dbReference>
<dbReference type="GeneID" id="5774519"/>
<dbReference type="KEGG" id="nmr:Nmar_1691"/>
<dbReference type="eggNOG" id="arCOG00868">
    <property type="taxonomic scope" value="Archaea"/>
</dbReference>
<dbReference type="HOGENOM" id="CLU_008162_3_1_2"/>
<dbReference type="InParanoid" id="A9A2R0"/>
<dbReference type="OrthoDB" id="115235at2157"/>
<dbReference type="PhylomeDB" id="A9A2R0"/>
<dbReference type="Proteomes" id="UP000000792">
    <property type="component" value="Chromosome"/>
</dbReference>
<dbReference type="GO" id="GO:0005886">
    <property type="term" value="C:plasma membrane"/>
    <property type="evidence" value="ECO:0007669"/>
    <property type="project" value="UniProtKB-SubCell"/>
</dbReference>
<dbReference type="GO" id="GO:0005524">
    <property type="term" value="F:ATP binding"/>
    <property type="evidence" value="ECO:0007669"/>
    <property type="project" value="UniProtKB-UniRule"/>
</dbReference>
<dbReference type="GO" id="GO:0016887">
    <property type="term" value="F:ATP hydrolysis activity"/>
    <property type="evidence" value="ECO:0007669"/>
    <property type="project" value="InterPro"/>
</dbReference>
<dbReference type="GO" id="GO:0046933">
    <property type="term" value="F:proton-transporting ATP synthase activity, rotational mechanism"/>
    <property type="evidence" value="ECO:0007669"/>
    <property type="project" value="UniProtKB-UniRule"/>
</dbReference>
<dbReference type="GO" id="GO:0046961">
    <property type="term" value="F:proton-transporting ATPase activity, rotational mechanism"/>
    <property type="evidence" value="ECO:0000318"/>
    <property type="project" value="GO_Central"/>
</dbReference>
<dbReference type="GO" id="GO:0042777">
    <property type="term" value="P:proton motive force-driven plasma membrane ATP synthesis"/>
    <property type="evidence" value="ECO:0007669"/>
    <property type="project" value="UniProtKB-UniRule"/>
</dbReference>
<dbReference type="GO" id="GO:1902600">
    <property type="term" value="P:proton transmembrane transport"/>
    <property type="evidence" value="ECO:0000318"/>
    <property type="project" value="GO_Central"/>
</dbReference>
<dbReference type="CDD" id="cd18111">
    <property type="entry name" value="ATP-synt_V_A-type_alpha_C"/>
    <property type="match status" value="1"/>
</dbReference>
<dbReference type="CDD" id="cd18119">
    <property type="entry name" value="ATP-synt_V_A-type_alpha_N"/>
    <property type="match status" value="1"/>
</dbReference>
<dbReference type="CDD" id="cd01134">
    <property type="entry name" value="V_A-ATPase_A"/>
    <property type="match status" value="1"/>
</dbReference>
<dbReference type="FunFam" id="1.10.1140.10:FF:000002">
    <property type="entry name" value="V-type proton ATPase catalytic subunit A"/>
    <property type="match status" value="1"/>
</dbReference>
<dbReference type="FunFam" id="2.40.30.20:FF:000002">
    <property type="entry name" value="V-type proton ATPase catalytic subunit A"/>
    <property type="match status" value="1"/>
</dbReference>
<dbReference type="Gene3D" id="2.40.30.20">
    <property type="match status" value="1"/>
</dbReference>
<dbReference type="Gene3D" id="2.40.50.100">
    <property type="match status" value="1"/>
</dbReference>
<dbReference type="Gene3D" id="1.10.1140.10">
    <property type="entry name" value="Bovine Mitochondrial F1-atpase, Atp Synthase Beta Chain, Chain D, domain 3"/>
    <property type="match status" value="1"/>
</dbReference>
<dbReference type="Gene3D" id="3.40.50.300">
    <property type="entry name" value="P-loop containing nucleotide triphosphate hydrolases"/>
    <property type="match status" value="1"/>
</dbReference>
<dbReference type="HAMAP" id="MF_00309">
    <property type="entry name" value="ATP_synth_A_arch"/>
    <property type="match status" value="1"/>
</dbReference>
<dbReference type="InterPro" id="IPR003593">
    <property type="entry name" value="AAA+_ATPase"/>
</dbReference>
<dbReference type="InterPro" id="IPR055190">
    <property type="entry name" value="ATP-synt_VA_C"/>
</dbReference>
<dbReference type="InterPro" id="IPR031686">
    <property type="entry name" value="ATP-synth_a_Xtn"/>
</dbReference>
<dbReference type="InterPro" id="IPR023366">
    <property type="entry name" value="ATP_synth_asu-like_sf"/>
</dbReference>
<dbReference type="InterPro" id="IPR020003">
    <property type="entry name" value="ATPase_a/bsu_AS"/>
</dbReference>
<dbReference type="InterPro" id="IPR004100">
    <property type="entry name" value="ATPase_F1/V1/A1_a/bsu_N"/>
</dbReference>
<dbReference type="InterPro" id="IPR036121">
    <property type="entry name" value="ATPase_F1/V1/A1_a/bsu_N_sf"/>
</dbReference>
<dbReference type="InterPro" id="IPR000194">
    <property type="entry name" value="ATPase_F1/V1/A1_a/bsu_nucl-bd"/>
</dbReference>
<dbReference type="InterPro" id="IPR024034">
    <property type="entry name" value="ATPase_F1/V1_b/a_C"/>
</dbReference>
<dbReference type="InterPro" id="IPR027417">
    <property type="entry name" value="P-loop_NTPase"/>
</dbReference>
<dbReference type="InterPro" id="IPR022878">
    <property type="entry name" value="V-ATPase_asu"/>
</dbReference>
<dbReference type="NCBIfam" id="NF003220">
    <property type="entry name" value="PRK04192.1"/>
    <property type="match status" value="1"/>
</dbReference>
<dbReference type="PANTHER" id="PTHR43607:SF1">
    <property type="entry name" value="H(+)-TRANSPORTING TWO-SECTOR ATPASE"/>
    <property type="match status" value="1"/>
</dbReference>
<dbReference type="PANTHER" id="PTHR43607">
    <property type="entry name" value="V-TYPE PROTON ATPASE CATALYTIC SUBUNIT A"/>
    <property type="match status" value="1"/>
</dbReference>
<dbReference type="Pfam" id="PF00006">
    <property type="entry name" value="ATP-synt_ab"/>
    <property type="match status" value="1"/>
</dbReference>
<dbReference type="Pfam" id="PF02874">
    <property type="entry name" value="ATP-synt_ab_N"/>
    <property type="match status" value="1"/>
</dbReference>
<dbReference type="Pfam" id="PF16886">
    <property type="entry name" value="ATP-synt_ab_Xtn"/>
    <property type="match status" value="1"/>
</dbReference>
<dbReference type="Pfam" id="PF22919">
    <property type="entry name" value="ATP-synt_VA_C"/>
    <property type="match status" value="1"/>
</dbReference>
<dbReference type="SMART" id="SM00382">
    <property type="entry name" value="AAA"/>
    <property type="match status" value="1"/>
</dbReference>
<dbReference type="SUPFAM" id="SSF47917">
    <property type="entry name" value="C-terminal domain of alpha and beta subunits of F1 ATP synthase"/>
    <property type="match status" value="1"/>
</dbReference>
<dbReference type="SUPFAM" id="SSF50615">
    <property type="entry name" value="N-terminal domain of alpha and beta subunits of F1 ATP synthase"/>
    <property type="match status" value="1"/>
</dbReference>
<dbReference type="SUPFAM" id="SSF52540">
    <property type="entry name" value="P-loop containing nucleoside triphosphate hydrolases"/>
    <property type="match status" value="1"/>
</dbReference>
<dbReference type="PROSITE" id="PS00152">
    <property type="entry name" value="ATPASE_ALPHA_BETA"/>
    <property type="match status" value="1"/>
</dbReference>
<name>AATA_NITMS</name>
<proteinExistence type="inferred from homology"/>
<sequence>MAAQGRIVWVSGPAVRADGMSEAKMYETVTVGDSKLVGEVIRLTGDVAFIQVYESTSGLKPGEPVIGTGNPLSVLLGPGIIGQLYDGIQRPLRALSEASGSFIGRGITTTPVDMAKKYHFVPSVSNGDEVAAGNVIGVVQETDLIEHSIMVPPDHKGGKISNLVSEGDYDLETVLATTEGEGETVELKMYHRWPVRKPRPYKNRYDPTVPLLTGQRVIDTFFPIAKGGTGSIPGAFGTGKTVTLHQIAKWADSQVVVYIGCGERGNEMTEVLVEFPHLKDPRSGKPLMDRTVLVANTSNMPVAAREASIYTGVTIAEYYRDMGKDVVLVADSTSRWAEALREMSGRLEEMPAEEGYPSYLASRLAEFYERAGRVRAAGSPDRDGSVTLIGAVSPSGGDFTEPVTTHTMRFIKTFWALDAKLAYSRHYPSINWMNSYSGYLADIAKWWGENINEDWLSLRSEVYGVLQREDTLKEIVRLLGPEALPDEEKLILEVARMVKIGLLQQNSFDDVDTYCSPEKQYKLMKLLVDFYKKGQQAIKEGTPLADIRAMKSITTLLKARMDVKDDEMPKLDQLDADMQEEFKSITGVKVSN</sequence>
<evidence type="ECO:0000255" key="1">
    <source>
        <dbReference type="HAMAP-Rule" id="MF_00309"/>
    </source>
</evidence>
<feature type="chain" id="PRO_1000115642" description="A-type ATP synthase subunit A">
    <location>
        <begin position="1"/>
        <end position="592"/>
    </location>
</feature>
<feature type="binding site" evidence="1">
    <location>
        <begin position="234"/>
        <end position="241"/>
    </location>
    <ligand>
        <name>ATP</name>
        <dbReference type="ChEBI" id="CHEBI:30616"/>
    </ligand>
</feature>